<protein>
    <recommendedName>
        <fullName evidence="12">Diguanylate cyclase TpbB</fullName>
        <shortName evidence="10">DGC</shortName>
        <ecNumber evidence="6 8">2.7.7.65</ecNumber>
    </recommendedName>
</protein>
<keyword id="KW-0002">3D-structure</keyword>
<keyword id="KW-0021">Allosteric enzyme</keyword>
<keyword id="KW-0997">Cell inner membrane</keyword>
<keyword id="KW-1003">Cell membrane</keyword>
<keyword id="KW-0342">GTP-binding</keyword>
<keyword id="KW-0460">Magnesium</keyword>
<keyword id="KW-0472">Membrane</keyword>
<keyword id="KW-0479">Metal-binding</keyword>
<keyword id="KW-0547">Nucleotide-binding</keyword>
<keyword id="KW-0597">Phosphoprotein</keyword>
<keyword id="KW-1185">Reference proteome</keyword>
<keyword id="KW-0808">Transferase</keyword>
<keyword id="KW-0812">Transmembrane</keyword>
<keyword id="KW-1133">Transmembrane helix</keyword>
<evidence type="ECO:0000250" key="1">
    <source>
        <dbReference type="UniProtKB" id="A0A0H2Z7X0"/>
    </source>
</evidence>
<evidence type="ECO:0000255" key="2"/>
<evidence type="ECO:0000255" key="3">
    <source>
        <dbReference type="PROSITE-ProRule" id="PRU00095"/>
    </source>
</evidence>
<evidence type="ECO:0000255" key="4">
    <source>
        <dbReference type="PROSITE-ProRule" id="PRU00102"/>
    </source>
</evidence>
<evidence type="ECO:0000256" key="5">
    <source>
        <dbReference type="SAM" id="MobiDB-lite"/>
    </source>
</evidence>
<evidence type="ECO:0000269" key="6">
    <source>
    </source>
</evidence>
<evidence type="ECO:0000269" key="7">
    <source>
    </source>
</evidence>
<evidence type="ECO:0000269" key="8">
    <source>
    </source>
</evidence>
<evidence type="ECO:0000269" key="9">
    <source>
    </source>
</evidence>
<evidence type="ECO:0000303" key="10">
    <source>
    </source>
</evidence>
<evidence type="ECO:0000303" key="11">
    <source>
    </source>
</evidence>
<evidence type="ECO:0000305" key="12"/>
<evidence type="ECO:0000305" key="13">
    <source>
    </source>
</evidence>
<evidence type="ECO:0000305" key="14">
    <source>
    </source>
</evidence>
<evidence type="ECO:0000305" key="15">
    <source>
    </source>
</evidence>
<evidence type="ECO:0000312" key="16">
    <source>
        <dbReference type="EMBL" id="AAG04509.1"/>
    </source>
</evidence>
<evidence type="ECO:0000312" key="17">
    <source>
        <dbReference type="PDB" id="7A7E"/>
    </source>
</evidence>
<evidence type="ECO:0007744" key="18">
    <source>
        <dbReference type="PDB" id="4IOB"/>
    </source>
</evidence>
<evidence type="ECO:0007744" key="19">
    <source>
        <dbReference type="PDB" id="7A7E"/>
    </source>
</evidence>
<evidence type="ECO:0007829" key="20">
    <source>
        <dbReference type="PDB" id="4IOB"/>
    </source>
</evidence>
<evidence type="ECO:0007829" key="21">
    <source>
        <dbReference type="PDB" id="7A7E"/>
    </source>
</evidence>
<dbReference type="EC" id="2.7.7.65" evidence="6 8"/>
<dbReference type="EMBL" id="AE004091">
    <property type="protein sequence ID" value="AAG04509.1"/>
    <property type="molecule type" value="Genomic_DNA"/>
</dbReference>
<dbReference type="PIR" id="D83505">
    <property type="entry name" value="D83505"/>
</dbReference>
<dbReference type="RefSeq" id="NP_249811.1">
    <property type="nucleotide sequence ID" value="NC_002516.2"/>
</dbReference>
<dbReference type="RefSeq" id="WP_003082256.1">
    <property type="nucleotide sequence ID" value="NZ_QZGE01000006.1"/>
</dbReference>
<dbReference type="PDB" id="4IOB">
    <property type="method" value="X-ray"/>
    <property type="resolution" value="2.78 A"/>
    <property type="chains" value="A=254-414"/>
</dbReference>
<dbReference type="PDB" id="7A7E">
    <property type="method" value="X-ray"/>
    <property type="resolution" value="2.80 A"/>
    <property type="chains" value="A/B/C=233-435"/>
</dbReference>
<dbReference type="PDBsum" id="4IOB"/>
<dbReference type="PDBsum" id="7A7E"/>
<dbReference type="SMR" id="Q9I4L5"/>
<dbReference type="FunCoup" id="Q9I4L5">
    <property type="interactions" value="5"/>
</dbReference>
<dbReference type="STRING" id="208964.PA1120"/>
<dbReference type="PaxDb" id="208964-PA1120"/>
<dbReference type="GeneID" id="881684"/>
<dbReference type="KEGG" id="pae:PA1120"/>
<dbReference type="PATRIC" id="fig|208964.12.peg.1162"/>
<dbReference type="PseudoCAP" id="PA1120"/>
<dbReference type="HOGENOM" id="CLU_039310_2_1_6"/>
<dbReference type="InParanoid" id="Q9I4L5"/>
<dbReference type="OrthoDB" id="9812260at2"/>
<dbReference type="PhylomeDB" id="Q9I4L5"/>
<dbReference type="BioCyc" id="PAER208964:G1FZ6-1146-MONOMER"/>
<dbReference type="UniPathway" id="UPA00599"/>
<dbReference type="EvolutionaryTrace" id="Q9I4L5"/>
<dbReference type="Proteomes" id="UP000002438">
    <property type="component" value="Chromosome"/>
</dbReference>
<dbReference type="GO" id="GO:0005886">
    <property type="term" value="C:plasma membrane"/>
    <property type="evidence" value="ECO:0007669"/>
    <property type="project" value="UniProtKB-SubCell"/>
</dbReference>
<dbReference type="GO" id="GO:0052621">
    <property type="term" value="F:diguanylate cyclase activity"/>
    <property type="evidence" value="ECO:0000314"/>
    <property type="project" value="PseudoCAP"/>
</dbReference>
<dbReference type="GO" id="GO:0005525">
    <property type="term" value="F:GTP binding"/>
    <property type="evidence" value="ECO:0007669"/>
    <property type="project" value="UniProtKB-KW"/>
</dbReference>
<dbReference type="GO" id="GO:0046872">
    <property type="term" value="F:metal ion binding"/>
    <property type="evidence" value="ECO:0007669"/>
    <property type="project" value="UniProtKB-KW"/>
</dbReference>
<dbReference type="GO" id="GO:0061939">
    <property type="term" value="P:c-di-GMP signaling"/>
    <property type="evidence" value="ECO:0000318"/>
    <property type="project" value="GO_Central"/>
</dbReference>
<dbReference type="GO" id="GO:0007165">
    <property type="term" value="P:signal transduction"/>
    <property type="evidence" value="ECO:0007669"/>
    <property type="project" value="InterPro"/>
</dbReference>
<dbReference type="CDD" id="cd01949">
    <property type="entry name" value="GGDEF"/>
    <property type="match status" value="1"/>
</dbReference>
<dbReference type="CDD" id="cd06225">
    <property type="entry name" value="HAMP"/>
    <property type="match status" value="1"/>
</dbReference>
<dbReference type="FunFam" id="3.30.70.270:FF:000090">
    <property type="entry name" value="Diguanylate cyclase TpbB"/>
    <property type="match status" value="1"/>
</dbReference>
<dbReference type="Gene3D" id="3.30.70.270">
    <property type="match status" value="1"/>
</dbReference>
<dbReference type="Gene3D" id="6.10.340.10">
    <property type="match status" value="1"/>
</dbReference>
<dbReference type="InterPro" id="IPR033417">
    <property type="entry name" value="CHASE8"/>
</dbReference>
<dbReference type="InterPro" id="IPR052163">
    <property type="entry name" value="DGC-Regulatory_Protein"/>
</dbReference>
<dbReference type="InterPro" id="IPR000160">
    <property type="entry name" value="GGDEF_dom"/>
</dbReference>
<dbReference type="InterPro" id="IPR003660">
    <property type="entry name" value="HAMP_dom"/>
</dbReference>
<dbReference type="InterPro" id="IPR029787">
    <property type="entry name" value="Nucleotide_cyclase"/>
</dbReference>
<dbReference type="InterPro" id="IPR043128">
    <property type="entry name" value="Rev_trsase/Diguanyl_cyclase"/>
</dbReference>
<dbReference type="NCBIfam" id="TIGR00254">
    <property type="entry name" value="GGDEF"/>
    <property type="match status" value="1"/>
</dbReference>
<dbReference type="PANTHER" id="PTHR46663">
    <property type="entry name" value="DIGUANYLATE CYCLASE DGCT-RELATED"/>
    <property type="match status" value="1"/>
</dbReference>
<dbReference type="PANTHER" id="PTHR46663:SF2">
    <property type="entry name" value="GGDEF DOMAIN-CONTAINING PROTEIN"/>
    <property type="match status" value="1"/>
</dbReference>
<dbReference type="Pfam" id="PF17152">
    <property type="entry name" value="CHASE8"/>
    <property type="match status" value="1"/>
</dbReference>
<dbReference type="Pfam" id="PF00990">
    <property type="entry name" value="GGDEF"/>
    <property type="match status" value="1"/>
</dbReference>
<dbReference type="Pfam" id="PF00672">
    <property type="entry name" value="HAMP"/>
    <property type="match status" value="1"/>
</dbReference>
<dbReference type="SMART" id="SM00267">
    <property type="entry name" value="GGDEF"/>
    <property type="match status" value="1"/>
</dbReference>
<dbReference type="SMART" id="SM00304">
    <property type="entry name" value="HAMP"/>
    <property type="match status" value="1"/>
</dbReference>
<dbReference type="SUPFAM" id="SSF55073">
    <property type="entry name" value="Nucleotide cyclase"/>
    <property type="match status" value="1"/>
</dbReference>
<dbReference type="PROSITE" id="PS50887">
    <property type="entry name" value="GGDEF"/>
    <property type="match status" value="1"/>
</dbReference>
<dbReference type="PROSITE" id="PS50885">
    <property type="entry name" value="HAMP"/>
    <property type="match status" value="1"/>
</dbReference>
<comment type="function">
    <text evidence="6 8">Catalyzes the synthesis of cyclic-di-GMP (c-di-GMP) via the condensation of 2 GTP molecules.</text>
</comment>
<comment type="function">
    <text evidence="6 7">Part of the YfiB-TpbB-YfiR (or yfiBNR) system, encoding a tripartite signaling module that modulates intracellular c-di-GMP levels (PubMed:20300602, PubMed:22719254). The system is a key regulator of the small colony variant (SCV) phenotype, and plays an important role in biofilm formation and in vivo persistence (PubMed:20300602). The c-di-GMP produced by TpbB/YfiN stimulates the production of the Pel and Psl exopolysaccharides, which promotes surface attachment, generates an SCV phenotype and confers resistance against phagocytosis (PubMed:20300602).</text>
</comment>
<comment type="catalytic activity">
    <reaction evidence="6 8">
        <text>2 GTP = 3',3'-c-di-GMP + 2 diphosphate</text>
        <dbReference type="Rhea" id="RHEA:24898"/>
        <dbReference type="ChEBI" id="CHEBI:33019"/>
        <dbReference type="ChEBI" id="CHEBI:37565"/>
        <dbReference type="ChEBI" id="CHEBI:58805"/>
        <dbReference type="EC" id="2.7.7.65"/>
    </reaction>
    <physiologicalReaction direction="left-to-right" evidence="6 8">
        <dbReference type="Rhea" id="RHEA:24899"/>
    </physiologicalReaction>
</comment>
<comment type="cofactor">
    <cofactor evidence="15">
        <name>Mg(2+)</name>
        <dbReference type="ChEBI" id="CHEBI:18420"/>
    </cofactor>
    <text evidence="15">Binds 1 Mg(2+) ion per monomer.</text>
</comment>
<comment type="activity regulation">
    <text evidence="1 6 7 8">Activity is tightly controlled by YfiR, a small periplasmic protein, and the OmpA/Pal-like outer-membrane lipoprotein YfiB (PubMed:20300602, PubMed:22719254). Diguanylate cyclase activity is inhibited by the specific interaction of YfiR with the TpbB periplasmic domain and is activated by YfiB, which releases the YfiR-mediated repression through sequestration of YfiR to the outer membrane (PubMed:20300602, PubMed:22719254). Release of repression leads to a conformational shift in TpbB/YfiN that propagates through the PAS and transmembrane domains to switch the cytoplasmic HAMP domain from an inactive to an active conformation and activate the C-terminal catalytic GGDEF domain (PubMed:22719254, PubMed:24278422). Thus, TpbB/YfiN appears to function by switching between discrete inactive and active functional states depending on the presence or absence of bound YfiR (PubMed:22719254). Activity is also controlled by dephosphorylation of the periplasmic domain by the tyrosine phosphatase TpbA (By similarity). These two mechanisms of regulation could in principle work in parallel or as part of the same regulatory pathway (PubMed:20300602). Does not undergo product feedback inhibition (PubMed:24278422).</text>
</comment>
<comment type="pathway">
    <text evidence="12">Purine metabolism; 3',5'-cyclic di-GMP biosynthesis.</text>
</comment>
<comment type="subunit">
    <text evidence="7">Homodimer (PubMed:22719254). Interacts with YfiR (PubMed:22719254).</text>
</comment>
<comment type="subcellular location">
    <subcellularLocation>
        <location evidence="13">Cell inner membrane</location>
        <topology evidence="2">Multi-pass membrane protein</topology>
    </subcellularLocation>
</comment>
<comment type="domain">
    <text evidence="8">The presence of the HAMP domain is required for dimerization and catalysis.</text>
</comment>
<comment type="PTM">
    <text evidence="1">Phosphorylated at both Tyr residues and Ser/Thr residues (By similarity). Dephosphorylated and inactivated by TpbA (By similarity).</text>
</comment>
<comment type="disruption phenotype">
    <text evidence="6">Deletion of the gene produces a wild type colony morphology and an attachment level around 60% of wild type.</text>
</comment>
<sequence length="435" mass="47514">MNRRRRYTGSNPSLRRVLYRAHLGVALVAVFTAGLAVTLVGLLTLRAYADPNQQLIARSISYTVEAAVVFGDAQAAEESLALIASSEEVSSAIVYDRQGQTLASWHRESTGPLHLLEQQLAHWLLSAPTEQPILHDGQKIGSVEVKGSGGSLLRFLLTGFAGMVLCLLLTALGAFYLSRRLVRGIVGPLDQLAKVAHTVRRERDFEKRVPEAGIAELSQLGEDFNALLDELESWQARLQDENASLAHQAHHDSLTSLPNRAFFEGRLSRALRDANEHREQLAVLFIDSDRFKEINDRLGHAAGDTVLVNIAMRIRGQLRESDLVARLGGDEFAVLLAPLASGADALRIADNIIASMQAPIRLSDGSTVSTSLTIGIALYPEHADTPAALLHDADMAMYIAKRQARGSRRLAELNDPRILQEEKEIDSATPEAPPK</sequence>
<gene>
    <name evidence="11" type="primary">tpbB</name>
    <name evidence="10" type="synonym">yfiN</name>
    <name evidence="16" type="ordered locus">PA1120</name>
</gene>
<reference key="1">
    <citation type="journal article" date="2000" name="Nature">
        <title>Complete genome sequence of Pseudomonas aeruginosa PAO1, an opportunistic pathogen.</title>
        <authorList>
            <person name="Stover C.K."/>
            <person name="Pham X.-Q.T."/>
            <person name="Erwin A.L."/>
            <person name="Mizoguchi S.D."/>
            <person name="Warrener P."/>
            <person name="Hickey M.J."/>
            <person name="Brinkman F.S.L."/>
            <person name="Hufnagle W.O."/>
            <person name="Kowalik D.J."/>
            <person name="Lagrou M."/>
            <person name="Garber R.L."/>
            <person name="Goltry L."/>
            <person name="Tolentino E."/>
            <person name="Westbrock-Wadman S."/>
            <person name="Yuan Y."/>
            <person name="Brody L.L."/>
            <person name="Coulter S.N."/>
            <person name="Folger K.R."/>
            <person name="Kas A."/>
            <person name="Larbig K."/>
            <person name="Lim R.M."/>
            <person name="Smith K.A."/>
            <person name="Spencer D.H."/>
            <person name="Wong G.K.-S."/>
            <person name="Wu Z."/>
            <person name="Paulsen I.T."/>
            <person name="Reizer J."/>
            <person name="Saier M.H. Jr."/>
            <person name="Hancock R.E.W."/>
            <person name="Lory S."/>
            <person name="Olson M.V."/>
        </authorList>
    </citation>
    <scope>NUCLEOTIDE SEQUENCE [LARGE SCALE GENOMIC DNA]</scope>
    <source>
        <strain>ATCC 15692 / DSM 22644 / CIP 104116 / JCM 14847 / LMG 12228 / 1C / PRS 101 / PAO1</strain>
    </source>
</reference>
<reference key="2">
    <citation type="journal article" date="2010" name="PLoS Pathog.">
        <title>YfiBNR mediates cyclic di-GMP dependent small colony variant formation and persistence in Pseudomonas aeruginosa.</title>
        <authorList>
            <person name="Malone J.G."/>
            <person name="Jaeger T."/>
            <person name="Spangler C."/>
            <person name="Ritz D."/>
            <person name="Spang A."/>
            <person name="Arrieumerlou C."/>
            <person name="Kaever V."/>
            <person name="Landmann R."/>
            <person name="Jenal U."/>
        </authorList>
    </citation>
    <scope>FUNCTION</scope>
    <scope>CATALYTIC ACTIVITY</scope>
    <scope>ACTIVITY REGULATION</scope>
    <scope>DISRUPTION PHENOTYPE</scope>
    <scope>MUTAGENESIS OF ASP-330</scope>
    <source>
        <strain>ATCC 15692 / DSM 22644 / CIP 104116 / JCM 14847 / LMG 12228 / 1C / PRS 101 / PAO1</strain>
    </source>
</reference>
<reference key="3">
    <citation type="journal article" date="2012" name="PLoS Pathog.">
        <title>The YfiBNR signal transduction mechanism reveals novel targets for the evolution of persistent Pseudomonas aeruginosa in cystic fibrosis airways.</title>
        <authorList>
            <person name="Malone J.G."/>
            <person name="Jaeger T."/>
            <person name="Manfredi P."/>
            <person name="Doetsch A."/>
            <person name="Blanka A."/>
            <person name="Bos R."/>
            <person name="Cornelis G.R."/>
            <person name="Haeussler S."/>
            <person name="Jenal U."/>
        </authorList>
    </citation>
    <scope>FUNCTION</scope>
    <scope>ACTIVITY REGULATION</scope>
    <scope>SUBUNIT</scope>
    <scope>INTERACTION WITH YFIR</scope>
    <scope>MUTAGENESIS OF ALA-33; VAL-40; PRO-51; ARG-58; SER-59; TYR-62; ALA-66; ALA-67; VAL-68; PHE-70; GLU-87; GLY-162; ALA-171; GLY-173; ASP-204; ALA-226; LEU-228 AND GLU-232</scope>
    <source>
        <strain>ATCC 15692 / DSM 22644 / CIP 104116 / JCM 14847 / LMG 12228 / 1C / PRS 101 / PAO1</strain>
    </source>
</reference>
<reference evidence="18" key="4">
    <citation type="journal article" date="2013" name="PLoS ONE">
        <title>Investigating the allosteric regulation of YfiN from Pseudomonas aeruginosa: clues from the structure of the catalytic domain.</title>
        <authorList>
            <person name="Giardina G."/>
            <person name="Paiardini A."/>
            <person name="Fernicola S."/>
            <person name="Franceschini S."/>
            <person name="Rinaldo S."/>
            <person name="Stelitano V."/>
            <person name="Cutruzzola F."/>
        </authorList>
    </citation>
    <scope>X-RAY CRYSTALLOGRAPHY (2.78 ANGSTROMS) OF 254-414</scope>
    <scope>FUNCTION</scope>
    <scope>CATALYTIC ACTIVITY</scope>
    <scope>ACTIVITY REGULATION</scope>
    <scope>DOMAIN</scope>
</reference>
<reference evidence="19" key="5">
    <citation type="journal article" date="2021" name="Life">
        <title>Studying GGDEF domain in the act: minimize conformational frustration to prevent artefacts.</title>
        <authorList>
            <person name="Mantoni F."/>
            <person name="Scribani Rossi C."/>
            <person name="Paiardini A."/>
            <person name="Di Matteo A."/>
            <person name="Cappellacci L."/>
            <person name="Petrelli R."/>
            <person name="Ricciutelli M."/>
            <person name="Paone A."/>
            <person name="Cutruzzola F."/>
            <person name="Giardina G."/>
            <person name="Rinaldo S."/>
        </authorList>
    </citation>
    <scope>X-RAY CRYSTALLOGRAPHY (2.80 ANGSTROMS) OF 233-435</scope>
    <scope>COFACTOR</scope>
</reference>
<name>TPBB_PSEAE</name>
<feature type="chain" id="PRO_0000458197" description="Diguanylate cyclase TpbB">
    <location>
        <begin position="1"/>
        <end position="435"/>
    </location>
</feature>
<feature type="topological domain" description="Cytoplasmic" evidence="14">
    <location>
        <begin position="1"/>
        <end position="22"/>
    </location>
</feature>
<feature type="transmembrane region" description="Helical" evidence="2">
    <location>
        <begin position="23"/>
        <end position="43"/>
    </location>
</feature>
<feature type="topological domain" description="Periplasmic" evidence="14">
    <location>
        <begin position="44"/>
        <end position="154"/>
    </location>
</feature>
<feature type="transmembrane region" description="Helical" evidence="2">
    <location>
        <begin position="155"/>
        <end position="175"/>
    </location>
</feature>
<feature type="topological domain" description="Cytoplasmic" evidence="14">
    <location>
        <begin position="176"/>
        <end position="435"/>
    </location>
</feature>
<feature type="domain" description="HAMP" evidence="4">
    <location>
        <begin position="183"/>
        <end position="236"/>
    </location>
</feature>
<feature type="domain" description="GGDEF" evidence="3">
    <location>
        <begin position="279"/>
        <end position="415"/>
    </location>
</feature>
<feature type="region of interest" description="Disordered" evidence="5">
    <location>
        <begin position="413"/>
        <end position="435"/>
    </location>
</feature>
<feature type="compositionally biased region" description="Basic and acidic residues" evidence="5">
    <location>
        <begin position="413"/>
        <end position="426"/>
    </location>
</feature>
<feature type="active site" description="Proton acceptor" evidence="2">
    <location>
        <position position="330"/>
    </location>
</feature>
<feature type="binding site" evidence="9 17">
    <location>
        <position position="288"/>
    </location>
    <ligand>
        <name>Mg(2+)</name>
        <dbReference type="ChEBI" id="CHEBI:18420"/>
    </ligand>
</feature>
<feature type="binding site" evidence="9 17">
    <location>
        <position position="330"/>
    </location>
    <ligand>
        <name>Mg(2+)</name>
        <dbReference type="ChEBI" id="CHEBI:18420"/>
    </ligand>
</feature>
<feature type="mutagenesis site" description="No longer binds to YfiR." evidence="7">
    <original>A</original>
    <variation>T</variation>
    <location>
        <position position="33"/>
    </location>
</feature>
<feature type="mutagenesis site" description="No longer binds to YfiR." evidence="7">
    <original>V</original>
    <variation>A</variation>
    <location>
        <position position="40"/>
    </location>
</feature>
<feature type="mutagenesis site" description="No longer binds to YfiR." evidence="7">
    <original>P</original>
    <variation>S</variation>
    <location>
        <position position="51"/>
    </location>
</feature>
<feature type="mutagenesis site" description="No longer binds to YfiR." evidence="7">
    <original>R</original>
    <variation>C</variation>
    <location>
        <position position="58"/>
    </location>
</feature>
<feature type="mutagenesis site" description="No longer binds to YfiR." evidence="7">
    <original>S</original>
    <variation>P</variation>
    <location>
        <position position="59"/>
    </location>
</feature>
<feature type="mutagenesis site" description="No longer binds to YfiR." evidence="7">
    <original>Y</original>
    <variation>H</variation>
    <location>
        <position position="62"/>
    </location>
</feature>
<feature type="mutagenesis site" description="No longer binds to YfiR." evidence="7">
    <original>A</original>
    <variation>V</variation>
    <location>
        <position position="66"/>
    </location>
</feature>
<feature type="mutagenesis site" description="No longer binds to YfiR." evidence="7">
    <original>A</original>
    <variation>P</variation>
    <variation>V</variation>
    <location>
        <position position="67"/>
    </location>
</feature>
<feature type="mutagenesis site" description="Residual binding to YfiR." evidence="7">
    <original>V</original>
    <variation>A</variation>
    <location>
        <position position="68"/>
    </location>
</feature>
<feature type="mutagenesis site" description="No longer binds to YfiR." evidence="7">
    <original>F</original>
    <variation>L</variation>
    <location>
        <position position="70"/>
    </location>
</feature>
<feature type="mutagenesis site" description="No longer binds to YfiR." evidence="7">
    <original>E</original>
    <variation>K</variation>
    <location>
        <position position="87"/>
    </location>
</feature>
<feature type="mutagenesis site" description="No longer binds to YfiR." evidence="7">
    <original>G</original>
    <variation>S</variation>
    <location>
        <position position="162"/>
    </location>
</feature>
<feature type="mutagenesis site" description="Residual binding to YfiR." evidence="7">
    <original>A</original>
    <variation>V</variation>
    <location>
        <position position="171"/>
    </location>
</feature>
<feature type="mutagenesis site" description="No longer binds to YfiR." evidence="7">
    <original>G</original>
    <variation>D</variation>
    <location>
        <position position="173"/>
    </location>
</feature>
<feature type="mutagenesis site" description="Residual binding to YfiR." evidence="7">
    <original>G</original>
    <variation>S</variation>
    <location>
        <position position="173"/>
    </location>
</feature>
<feature type="mutagenesis site" description="Residual binding to YfiR." evidence="7">
    <original>D</original>
    <variation>N</variation>
    <location>
        <position position="204"/>
    </location>
</feature>
<feature type="mutagenesis site" description="Residual binding to YfiR." evidence="7">
    <original>A</original>
    <variation>T</variation>
    <location>
        <position position="226"/>
    </location>
</feature>
<feature type="mutagenesis site" description="No longer binds to YfiR." evidence="7">
    <original>L</original>
    <variation>F</variation>
    <location>
        <position position="228"/>
    </location>
</feature>
<feature type="mutagenesis site" description="No longer binds to YfiR." evidence="7">
    <original>E</original>
    <variation>D</variation>
    <location>
        <position position="232"/>
    </location>
</feature>
<feature type="mutagenesis site" description="Produces a wild type colony morphology and an attachment level around 60% of wild type." evidence="6">
    <original>D</original>
    <variation>A</variation>
    <location>
        <position position="330"/>
    </location>
</feature>
<feature type="turn" evidence="21">
    <location>
        <begin position="253"/>
        <end position="255"/>
    </location>
</feature>
<feature type="helix" evidence="20">
    <location>
        <begin position="260"/>
        <end position="276"/>
    </location>
</feature>
<feature type="strand" evidence="20">
    <location>
        <begin position="280"/>
        <end position="288"/>
    </location>
</feature>
<feature type="helix" evidence="20">
    <location>
        <begin position="291"/>
        <end position="298"/>
    </location>
</feature>
<feature type="helix" evidence="20">
    <location>
        <begin position="300"/>
        <end position="315"/>
    </location>
</feature>
<feature type="strand" evidence="20">
    <location>
        <begin position="322"/>
        <end position="328"/>
    </location>
</feature>
<feature type="strand" evidence="20">
    <location>
        <begin position="331"/>
        <end position="340"/>
    </location>
</feature>
<feature type="helix" evidence="20">
    <location>
        <begin position="342"/>
        <end position="355"/>
    </location>
</feature>
<feature type="strand" evidence="20">
    <location>
        <begin position="372"/>
        <end position="379"/>
    </location>
</feature>
<feature type="turn" evidence="20">
    <location>
        <begin position="380"/>
        <end position="382"/>
    </location>
</feature>
<feature type="helix" evidence="20">
    <location>
        <begin position="386"/>
        <end position="403"/>
    </location>
</feature>
<feature type="strand" evidence="20">
    <location>
        <begin position="408"/>
        <end position="410"/>
    </location>
</feature>
<feature type="helix" evidence="21">
    <location>
        <begin position="415"/>
        <end position="420"/>
    </location>
</feature>
<proteinExistence type="evidence at protein level"/>
<accession>Q9I4L5</accession>
<organism>
    <name type="scientific">Pseudomonas aeruginosa (strain ATCC 15692 / DSM 22644 / CIP 104116 / JCM 14847 / LMG 12228 / 1C / PRS 101 / PAO1)</name>
    <dbReference type="NCBI Taxonomy" id="208964"/>
    <lineage>
        <taxon>Bacteria</taxon>
        <taxon>Pseudomonadati</taxon>
        <taxon>Pseudomonadota</taxon>
        <taxon>Gammaproteobacteria</taxon>
        <taxon>Pseudomonadales</taxon>
        <taxon>Pseudomonadaceae</taxon>
        <taxon>Pseudomonas</taxon>
    </lineage>
</organism>